<reference key="1">
    <citation type="submission" date="2004-04" db="EMBL/GenBank/DDBJ databases">
        <title>KNOX1 and histone H4 expression patterns in Chelidonium majus and Eschscholzia californica.</title>
        <authorList>
            <person name="Groot E.P."/>
            <person name="Gleissberg S."/>
        </authorList>
    </citation>
    <scope>NUCLEOTIDE SEQUENCE [MRNA]</scope>
    <source>
        <tissue>Shoot apex</tissue>
    </source>
</reference>
<protein>
    <recommendedName>
        <fullName>Histone H4</fullName>
    </recommendedName>
</protein>
<comment type="function">
    <text>Core component of nucleosome. Nucleosomes wrap and compact DNA into chromatin, limiting DNA accessibility to the cellular machineries which require DNA as a template. Histones thereby play a central role in transcription regulation, DNA repair, DNA replication and chromosomal stability. DNA accessibility is regulated via a complex set of post-translational modifications of histones, also called histone code, and nucleosome remodeling.</text>
</comment>
<comment type="subunit">
    <text>The nucleosome is a histone octamer containing two molecules each of H2A, H2B, H3 and H4 assembled in one H3-H4 heterotetramer and two H2A-H2B heterodimers. The octamer wraps approximately 147 bp of DNA.</text>
</comment>
<comment type="subcellular location">
    <subcellularLocation>
        <location evidence="1">Nucleus</location>
    </subcellularLocation>
    <subcellularLocation>
        <location evidence="1">Chromosome</location>
    </subcellularLocation>
</comment>
<comment type="similarity">
    <text evidence="3">Belongs to the histone H4 family.</text>
</comment>
<accession>Q6PMI5</accession>
<dbReference type="EMBL" id="AY594659">
    <property type="protein sequence ID" value="AAT01924.1"/>
    <property type="molecule type" value="mRNA"/>
</dbReference>
<dbReference type="SMR" id="Q6PMI5"/>
<dbReference type="GO" id="GO:0000786">
    <property type="term" value="C:nucleosome"/>
    <property type="evidence" value="ECO:0007669"/>
    <property type="project" value="UniProtKB-KW"/>
</dbReference>
<dbReference type="GO" id="GO:0005634">
    <property type="term" value="C:nucleus"/>
    <property type="evidence" value="ECO:0007669"/>
    <property type="project" value="UniProtKB-SubCell"/>
</dbReference>
<dbReference type="GO" id="GO:0003677">
    <property type="term" value="F:DNA binding"/>
    <property type="evidence" value="ECO:0007669"/>
    <property type="project" value="UniProtKB-KW"/>
</dbReference>
<dbReference type="GO" id="GO:0046982">
    <property type="term" value="F:protein heterodimerization activity"/>
    <property type="evidence" value="ECO:0007669"/>
    <property type="project" value="InterPro"/>
</dbReference>
<dbReference type="GO" id="GO:0030527">
    <property type="term" value="F:structural constituent of chromatin"/>
    <property type="evidence" value="ECO:0007669"/>
    <property type="project" value="InterPro"/>
</dbReference>
<dbReference type="CDD" id="cd22912">
    <property type="entry name" value="HFD_H4"/>
    <property type="match status" value="1"/>
</dbReference>
<dbReference type="FunFam" id="1.10.20.10:FF:000002">
    <property type="entry name" value="Histone H4"/>
    <property type="match status" value="1"/>
</dbReference>
<dbReference type="Gene3D" id="1.10.20.10">
    <property type="entry name" value="Histone, subunit A"/>
    <property type="match status" value="1"/>
</dbReference>
<dbReference type="InterPro" id="IPR035425">
    <property type="entry name" value="CENP-T/H4_C"/>
</dbReference>
<dbReference type="InterPro" id="IPR009072">
    <property type="entry name" value="Histone-fold"/>
</dbReference>
<dbReference type="InterPro" id="IPR001951">
    <property type="entry name" value="Histone_H4"/>
</dbReference>
<dbReference type="InterPro" id="IPR019809">
    <property type="entry name" value="Histone_H4_CS"/>
</dbReference>
<dbReference type="PANTHER" id="PTHR10484">
    <property type="entry name" value="HISTONE H4"/>
    <property type="match status" value="1"/>
</dbReference>
<dbReference type="Pfam" id="PF15511">
    <property type="entry name" value="CENP-T_C"/>
    <property type="match status" value="1"/>
</dbReference>
<dbReference type="PRINTS" id="PR00623">
    <property type="entry name" value="HISTONEH4"/>
</dbReference>
<dbReference type="SMART" id="SM00417">
    <property type="entry name" value="H4"/>
    <property type="match status" value="1"/>
</dbReference>
<dbReference type="SUPFAM" id="SSF47113">
    <property type="entry name" value="Histone-fold"/>
    <property type="match status" value="1"/>
</dbReference>
<dbReference type="PROSITE" id="PS00047">
    <property type="entry name" value="HISTONE_H4"/>
    <property type="match status" value="1"/>
</dbReference>
<keyword id="KW-0007">Acetylation</keyword>
<keyword id="KW-0158">Chromosome</keyword>
<keyword id="KW-0238">DNA-binding</keyword>
<keyword id="KW-0488">Methylation</keyword>
<keyword id="KW-0544">Nucleosome core</keyword>
<keyword id="KW-0539">Nucleus</keyword>
<evidence type="ECO:0000250" key="1"/>
<evidence type="ECO:0000256" key="2">
    <source>
        <dbReference type="SAM" id="MobiDB-lite"/>
    </source>
</evidence>
<evidence type="ECO:0000305" key="3"/>
<sequence>MSGRGKGGKGLGKGGAKRHRKVLRDNIQGITKPAIRRLARRGGVKRISGLIYEETRGVLKIFLENVIRDAVTYTEHARRKTVTAMDVVYALKRQGRTLYGFGG</sequence>
<feature type="initiator methionine" description="Removed" evidence="1">
    <location>
        <position position="1"/>
    </location>
</feature>
<feature type="chain" id="PRO_0000158295" description="Histone H4">
    <location>
        <begin position="2"/>
        <end position="103"/>
    </location>
</feature>
<feature type="DNA-binding region">
    <location>
        <begin position="17"/>
        <end position="21"/>
    </location>
</feature>
<feature type="region of interest" description="Disordered" evidence="2">
    <location>
        <begin position="1"/>
        <end position="20"/>
    </location>
</feature>
<feature type="compositionally biased region" description="Gly residues" evidence="2">
    <location>
        <begin position="1"/>
        <end position="14"/>
    </location>
</feature>
<feature type="modified residue" description="N-acetylserine" evidence="1">
    <location>
        <position position="2"/>
    </location>
</feature>
<feature type="modified residue" description="N6-acetyllysine" evidence="1">
    <location>
        <position position="17"/>
    </location>
</feature>
<feature type="modified residue" description="N6-methyllysine" evidence="1">
    <location>
        <position position="21"/>
    </location>
</feature>
<name>H4_CHEMJ</name>
<organism>
    <name type="scientific">Chelidonium majus</name>
    <name type="common">Greater celandine</name>
    <dbReference type="NCBI Taxonomy" id="71251"/>
    <lineage>
        <taxon>Eukaryota</taxon>
        <taxon>Viridiplantae</taxon>
        <taxon>Streptophyta</taxon>
        <taxon>Embryophyta</taxon>
        <taxon>Tracheophyta</taxon>
        <taxon>Spermatophyta</taxon>
        <taxon>Magnoliopsida</taxon>
        <taxon>Ranunculales</taxon>
        <taxon>Papaveraceae</taxon>
        <taxon>Papaveroideae</taxon>
        <taxon>Chelidonium</taxon>
    </lineage>
</organism>
<proteinExistence type="inferred from homology"/>